<proteinExistence type="inferred from homology"/>
<reference key="1">
    <citation type="journal article" date="2009" name="Nature">
        <title>Evolution of pathogenicity and sexual reproduction in eight Candida genomes.</title>
        <authorList>
            <person name="Butler G."/>
            <person name="Rasmussen M.D."/>
            <person name="Lin M.F."/>
            <person name="Santos M.A.S."/>
            <person name="Sakthikumar S."/>
            <person name="Munro C.A."/>
            <person name="Rheinbay E."/>
            <person name="Grabherr M."/>
            <person name="Forche A."/>
            <person name="Reedy J.L."/>
            <person name="Agrafioti I."/>
            <person name="Arnaud M.B."/>
            <person name="Bates S."/>
            <person name="Brown A.J.P."/>
            <person name="Brunke S."/>
            <person name="Costanzo M.C."/>
            <person name="Fitzpatrick D.A."/>
            <person name="de Groot P.W.J."/>
            <person name="Harris D."/>
            <person name="Hoyer L.L."/>
            <person name="Hube B."/>
            <person name="Klis F.M."/>
            <person name="Kodira C."/>
            <person name="Lennard N."/>
            <person name="Logue M.E."/>
            <person name="Martin R."/>
            <person name="Neiman A.M."/>
            <person name="Nikolaou E."/>
            <person name="Quail M.A."/>
            <person name="Quinn J."/>
            <person name="Santos M.C."/>
            <person name="Schmitzberger F.F."/>
            <person name="Sherlock G."/>
            <person name="Shah P."/>
            <person name="Silverstein K.A.T."/>
            <person name="Skrzypek M.S."/>
            <person name="Soll D."/>
            <person name="Staggs R."/>
            <person name="Stansfield I."/>
            <person name="Stumpf M.P.H."/>
            <person name="Sudbery P.E."/>
            <person name="Srikantha T."/>
            <person name="Zeng Q."/>
            <person name="Berman J."/>
            <person name="Berriman M."/>
            <person name="Heitman J."/>
            <person name="Gow N.A.R."/>
            <person name="Lorenz M.C."/>
            <person name="Birren B.W."/>
            <person name="Kellis M."/>
            <person name="Cuomo C.A."/>
        </authorList>
    </citation>
    <scope>NUCLEOTIDE SEQUENCE [LARGE SCALE GENOMIC DNA]</scope>
    <source>
        <strain>WO-1</strain>
    </source>
</reference>
<evidence type="ECO:0000255" key="1">
    <source>
        <dbReference type="HAMAP-Rule" id="MF_03104"/>
    </source>
</evidence>
<evidence type="ECO:0000256" key="2">
    <source>
        <dbReference type="SAM" id="MobiDB-lite"/>
    </source>
</evidence>
<feature type="chain" id="PRO_0000384276" description="Mitochondrial distribution and morphology protein 12">
    <location>
        <begin position="1"/>
        <end position="427"/>
    </location>
</feature>
<feature type="domain" description="SMP-LTD" evidence="1">
    <location>
        <begin position="1"/>
        <end position="387"/>
    </location>
</feature>
<feature type="region of interest" description="Disordered" evidence="2">
    <location>
        <begin position="81"/>
        <end position="168"/>
    </location>
</feature>
<feature type="region of interest" description="Disordered" evidence="2">
    <location>
        <begin position="387"/>
        <end position="427"/>
    </location>
</feature>
<feature type="compositionally biased region" description="Basic and acidic residues" evidence="2">
    <location>
        <begin position="81"/>
        <end position="96"/>
    </location>
</feature>
<feature type="compositionally biased region" description="Acidic residues" evidence="2">
    <location>
        <begin position="106"/>
        <end position="133"/>
    </location>
</feature>
<feature type="compositionally biased region" description="Polar residues" evidence="2">
    <location>
        <begin position="146"/>
        <end position="161"/>
    </location>
</feature>
<feature type="compositionally biased region" description="Acidic residues" evidence="2">
    <location>
        <begin position="387"/>
        <end position="402"/>
    </location>
</feature>
<feature type="compositionally biased region" description="Basic and acidic residues" evidence="2">
    <location>
        <begin position="411"/>
        <end position="427"/>
    </location>
</feature>
<gene>
    <name evidence="1" type="primary">MDM12</name>
    <name type="ORF">CAWG_05471</name>
</gene>
<comment type="function">
    <text evidence="1">Component of the ERMES/MDM complex, which serves as a molecular tether to connect the endoplasmic reticulum (ER) and mitochondria. Components of this complex are involved in the control of mitochondrial shape and protein biogenesis, and function in nonvesicular lipid trafficking between the ER and mitochondria. MDM12 is required for the interaction of the ER-resident membrane protein MMM1 and the outer mitochondrial membrane-resident beta-barrel protein MDM10. The MDM12-MMM1 subcomplex functions in the major beta-barrel assembly pathway that is responsible for biogenesis of all mitochondrial outer membrane beta-barrel proteins, and acts in a late step after the SAM complex. The MDM10-MDM12-MMM1 subcomplex further acts in the TOM40-specific pathway after the action of the MDM12-MMM1 complex. Essential for establishing and maintaining the structure of mitochondria and maintenance of mtDNA nucleoids.</text>
</comment>
<comment type="subunit">
    <text evidence="1">Component of the ER-mitochondria encounter structure (ERMES) or MDM complex, composed of MMM1, MDM10, MDM12 and MDM34. A MMM1 homodimer associates with one molecule of MDM12 on each side in a pairwise head-to-tail manner, and the SMP-LTD domains of MMM1 and MDM12 generate a continuous hydrophobic tunnel for phospholipid trafficking.</text>
</comment>
<comment type="subcellular location">
    <subcellularLocation>
        <location evidence="1">Mitochondrion outer membrane</location>
        <topology evidence="1">Peripheral membrane protein</topology>
        <orientation evidence="1">Cytoplasmic side</orientation>
    </subcellularLocation>
    <subcellularLocation>
        <location evidence="1">Endoplasmic reticulum membrane</location>
        <topology evidence="1">Peripheral membrane protein</topology>
        <orientation evidence="1">Cytoplasmic side</orientation>
    </subcellularLocation>
    <text evidence="1">The ERMES/MDM complex localizes to a few discrete foci (around 10 per single cell), that represent mitochondria-endoplasmic reticulum junctions. These foci are often found next to mtDNA nucleoids.</text>
</comment>
<comment type="domain">
    <text evidence="1">The SMP-LTD domain is a barrel-like domain that can bind various types of glycerophospholipids in its interior and mediate their transfer between two adjacent bilayers.</text>
</comment>
<comment type="similarity">
    <text evidence="1">Belongs to the MDM12 family.</text>
</comment>
<dbReference type="EMBL" id="CM000313">
    <property type="protein sequence ID" value="EEQ46919.1"/>
    <property type="molecule type" value="Genomic_DNA"/>
</dbReference>
<dbReference type="SMR" id="C4YTH8"/>
<dbReference type="PaxDb" id="5476-C4YTH8"/>
<dbReference type="VEuPathDB" id="FungiDB:CAWG_05471"/>
<dbReference type="HOGENOM" id="CLU_026794_2_0_1"/>
<dbReference type="OMA" id="KRAHFCF"/>
<dbReference type="OrthoDB" id="25678at766764"/>
<dbReference type="Proteomes" id="UP000001429">
    <property type="component" value="Chromosome 7"/>
</dbReference>
<dbReference type="GO" id="GO:0005789">
    <property type="term" value="C:endoplasmic reticulum membrane"/>
    <property type="evidence" value="ECO:0007669"/>
    <property type="project" value="UniProtKB-SubCell"/>
</dbReference>
<dbReference type="GO" id="GO:0032865">
    <property type="term" value="C:ERMES complex"/>
    <property type="evidence" value="ECO:0007669"/>
    <property type="project" value="UniProtKB-UniRule"/>
</dbReference>
<dbReference type="GO" id="GO:0008289">
    <property type="term" value="F:lipid binding"/>
    <property type="evidence" value="ECO:0007669"/>
    <property type="project" value="UniProtKB-KW"/>
</dbReference>
<dbReference type="GO" id="GO:0000002">
    <property type="term" value="P:mitochondrial genome maintenance"/>
    <property type="evidence" value="ECO:0007669"/>
    <property type="project" value="UniProtKB-UniRule"/>
</dbReference>
<dbReference type="GO" id="GO:1990456">
    <property type="term" value="P:mitochondrion-endoplasmic reticulum membrane tethering"/>
    <property type="evidence" value="ECO:0007669"/>
    <property type="project" value="TreeGrafter"/>
</dbReference>
<dbReference type="GO" id="GO:0015914">
    <property type="term" value="P:phospholipid transport"/>
    <property type="evidence" value="ECO:0007669"/>
    <property type="project" value="TreeGrafter"/>
</dbReference>
<dbReference type="GO" id="GO:0045040">
    <property type="term" value="P:protein insertion into mitochondrial outer membrane"/>
    <property type="evidence" value="ECO:0007669"/>
    <property type="project" value="UniProtKB-UniRule"/>
</dbReference>
<dbReference type="CDD" id="cd21672">
    <property type="entry name" value="SMP_Mdm12"/>
    <property type="match status" value="1"/>
</dbReference>
<dbReference type="HAMAP" id="MF_03104">
    <property type="entry name" value="Mdm12"/>
    <property type="match status" value="1"/>
</dbReference>
<dbReference type="InterPro" id="IPR027532">
    <property type="entry name" value="Mdm12"/>
</dbReference>
<dbReference type="InterPro" id="IPR031468">
    <property type="entry name" value="SMP_LBD"/>
</dbReference>
<dbReference type="PANTHER" id="PTHR28204">
    <property type="entry name" value="MITOCHONDRIAL DISTRIBUTION AND MORPHOLOGY PROTEIN 12"/>
    <property type="match status" value="1"/>
</dbReference>
<dbReference type="PANTHER" id="PTHR28204:SF1">
    <property type="entry name" value="MITOCHONDRIAL DISTRIBUTION AND MORPHOLOGY PROTEIN 12"/>
    <property type="match status" value="1"/>
</dbReference>
<dbReference type="PROSITE" id="PS51847">
    <property type="entry name" value="SMP"/>
    <property type="match status" value="1"/>
</dbReference>
<accession>C4YTH8</accession>
<protein>
    <recommendedName>
        <fullName evidence="1">Mitochondrial distribution and morphology protein 12</fullName>
    </recommendedName>
    <alternativeName>
        <fullName evidence="1">Mitochondrial inheritance component MDM12</fullName>
    </alternativeName>
</protein>
<keyword id="KW-0256">Endoplasmic reticulum</keyword>
<keyword id="KW-0445">Lipid transport</keyword>
<keyword id="KW-0446">Lipid-binding</keyword>
<keyword id="KW-0472">Membrane</keyword>
<keyword id="KW-0496">Mitochondrion</keyword>
<keyword id="KW-1000">Mitochondrion outer membrane</keyword>
<keyword id="KW-0813">Transport</keyword>
<organism>
    <name type="scientific">Candida albicans (strain WO-1)</name>
    <name type="common">Yeast</name>
    <dbReference type="NCBI Taxonomy" id="294748"/>
    <lineage>
        <taxon>Eukaryota</taxon>
        <taxon>Fungi</taxon>
        <taxon>Dikarya</taxon>
        <taxon>Ascomycota</taxon>
        <taxon>Saccharomycotina</taxon>
        <taxon>Pichiomycetes</taxon>
        <taxon>Debaryomycetaceae</taxon>
        <taxon>Candida/Lodderomyces clade</taxon>
        <taxon>Candida</taxon>
    </lineage>
</organism>
<sequence length="427" mass="47943">MSFDINWNQLTIDDTINQSIKEFLDQQFKNISLPSFISNLAVTDFNLGEIPPEVTIRHIGDPFEEFYEDENILGAMNEANNDSKDEHLKNHGDGINKDSGYNSQNLDDEDEDDEDDDEDDEDEEEEDEDDYDDHDLGTINEGISLLNFNENSTTPSANSFAGSAAPPLPPPLNPSRDSFHSILHPYGVNSIIGATGAGSETPTNILNQNYLSSRVLPKISVKQKQPHHDDNDIQLIVEINYKGDMHINLLVNLLVNYPSPNFISLPIKLHITDIVIHSIATIAYLKKSVFLSFLCDVDDTFPDFDSNVQTPTSTTGGNFVDYYSNDATINKERIDIVKKIKIESEIGEVENNILRNVGKVEKFLVEQLRNILRDEIAWPSWICIDMNDDDDEEEEEESEDNDGGNSDLNDNDGKHGDGRTDETEAGE</sequence>
<name>MDM12_CANAW</name>